<reference key="1">
    <citation type="journal article" date="2008" name="Genome Res.">
        <title>Comparative genome analysis of Salmonella enteritidis PT4 and Salmonella gallinarum 287/91 provides insights into evolutionary and host adaptation pathways.</title>
        <authorList>
            <person name="Thomson N.R."/>
            <person name="Clayton D.J."/>
            <person name="Windhorst D."/>
            <person name="Vernikos G."/>
            <person name="Davidson S."/>
            <person name="Churcher C."/>
            <person name="Quail M.A."/>
            <person name="Stevens M."/>
            <person name="Jones M.A."/>
            <person name="Watson M."/>
            <person name="Barron A."/>
            <person name="Layton A."/>
            <person name="Pickard D."/>
            <person name="Kingsley R.A."/>
            <person name="Bignell A."/>
            <person name="Clark L."/>
            <person name="Harris B."/>
            <person name="Ormond D."/>
            <person name="Abdellah Z."/>
            <person name="Brooks K."/>
            <person name="Cherevach I."/>
            <person name="Chillingworth T."/>
            <person name="Woodward J."/>
            <person name="Norberczak H."/>
            <person name="Lord A."/>
            <person name="Arrowsmith C."/>
            <person name="Jagels K."/>
            <person name="Moule S."/>
            <person name="Mungall K."/>
            <person name="Saunders M."/>
            <person name="Whitehead S."/>
            <person name="Chabalgoity J.A."/>
            <person name="Maskell D."/>
            <person name="Humphreys T."/>
            <person name="Roberts M."/>
            <person name="Barrow P.A."/>
            <person name="Dougan G."/>
            <person name="Parkhill J."/>
        </authorList>
    </citation>
    <scope>NUCLEOTIDE SEQUENCE [LARGE SCALE GENOMIC DNA]</scope>
    <source>
        <strain>P125109</strain>
    </source>
</reference>
<name>ARGR_SALEP</name>
<comment type="function">
    <text evidence="1">Regulates arginine biosynthesis genes.</text>
</comment>
<comment type="pathway">
    <text>Amino-acid biosynthesis; L-arginine biosynthesis [regulation].</text>
</comment>
<comment type="subcellular location">
    <subcellularLocation>
        <location evidence="1">Cytoplasm</location>
    </subcellularLocation>
</comment>
<comment type="similarity">
    <text evidence="1">Belongs to the ArgR family.</text>
</comment>
<protein>
    <recommendedName>
        <fullName evidence="1">Arginine repressor</fullName>
    </recommendedName>
</protein>
<keyword id="KW-0028">Amino-acid biosynthesis</keyword>
<keyword id="KW-0055">Arginine biosynthesis</keyword>
<keyword id="KW-0963">Cytoplasm</keyword>
<keyword id="KW-0238">DNA-binding</keyword>
<keyword id="KW-0678">Repressor</keyword>
<keyword id="KW-0804">Transcription</keyword>
<keyword id="KW-0805">Transcription regulation</keyword>
<proteinExistence type="inferred from homology"/>
<dbReference type="EMBL" id="AM933172">
    <property type="protein sequence ID" value="CAR34769.1"/>
    <property type="molecule type" value="Genomic_DNA"/>
</dbReference>
<dbReference type="RefSeq" id="WP_001257852.1">
    <property type="nucleotide sequence ID" value="NC_011294.1"/>
</dbReference>
<dbReference type="SMR" id="B5R1A3"/>
<dbReference type="KEGG" id="set:SEN3193"/>
<dbReference type="HOGENOM" id="CLU_097103_2_0_6"/>
<dbReference type="UniPathway" id="UPA00068"/>
<dbReference type="Proteomes" id="UP000000613">
    <property type="component" value="Chromosome"/>
</dbReference>
<dbReference type="GO" id="GO:0005737">
    <property type="term" value="C:cytoplasm"/>
    <property type="evidence" value="ECO:0007669"/>
    <property type="project" value="UniProtKB-SubCell"/>
</dbReference>
<dbReference type="GO" id="GO:0034618">
    <property type="term" value="F:arginine binding"/>
    <property type="evidence" value="ECO:0007669"/>
    <property type="project" value="InterPro"/>
</dbReference>
<dbReference type="GO" id="GO:0003677">
    <property type="term" value="F:DNA binding"/>
    <property type="evidence" value="ECO:0007669"/>
    <property type="project" value="UniProtKB-KW"/>
</dbReference>
<dbReference type="GO" id="GO:0003700">
    <property type="term" value="F:DNA-binding transcription factor activity"/>
    <property type="evidence" value="ECO:0007669"/>
    <property type="project" value="UniProtKB-UniRule"/>
</dbReference>
<dbReference type="GO" id="GO:0006526">
    <property type="term" value="P:L-arginine biosynthetic process"/>
    <property type="evidence" value="ECO:0007669"/>
    <property type="project" value="UniProtKB-UniPathway"/>
</dbReference>
<dbReference type="GO" id="GO:0051259">
    <property type="term" value="P:protein complex oligomerization"/>
    <property type="evidence" value="ECO:0007669"/>
    <property type="project" value="InterPro"/>
</dbReference>
<dbReference type="GO" id="GO:1900079">
    <property type="term" value="P:regulation of arginine biosynthetic process"/>
    <property type="evidence" value="ECO:0007669"/>
    <property type="project" value="UniProtKB-UniRule"/>
</dbReference>
<dbReference type="FunFam" id="1.10.10.10:FF:000074">
    <property type="entry name" value="Arginine repressor"/>
    <property type="match status" value="1"/>
</dbReference>
<dbReference type="FunFam" id="3.30.1360.40:FF:000004">
    <property type="entry name" value="Arginine repressor"/>
    <property type="match status" value="1"/>
</dbReference>
<dbReference type="Gene3D" id="3.30.1360.40">
    <property type="match status" value="1"/>
</dbReference>
<dbReference type="Gene3D" id="1.10.10.10">
    <property type="entry name" value="Winged helix-like DNA-binding domain superfamily/Winged helix DNA-binding domain"/>
    <property type="match status" value="1"/>
</dbReference>
<dbReference type="HAMAP" id="MF_00173">
    <property type="entry name" value="Arg_repressor"/>
    <property type="match status" value="1"/>
</dbReference>
<dbReference type="InterPro" id="IPR001669">
    <property type="entry name" value="Arg_repress"/>
</dbReference>
<dbReference type="InterPro" id="IPR020899">
    <property type="entry name" value="Arg_repress_C"/>
</dbReference>
<dbReference type="InterPro" id="IPR036251">
    <property type="entry name" value="Arg_repress_C_sf"/>
</dbReference>
<dbReference type="InterPro" id="IPR020900">
    <property type="entry name" value="Arg_repress_DNA-bd"/>
</dbReference>
<dbReference type="InterPro" id="IPR036388">
    <property type="entry name" value="WH-like_DNA-bd_sf"/>
</dbReference>
<dbReference type="InterPro" id="IPR036390">
    <property type="entry name" value="WH_DNA-bd_sf"/>
</dbReference>
<dbReference type="NCBIfam" id="TIGR01529">
    <property type="entry name" value="argR_whole"/>
    <property type="match status" value="1"/>
</dbReference>
<dbReference type="NCBIfam" id="NF003457">
    <property type="entry name" value="PRK05066.1"/>
    <property type="match status" value="1"/>
</dbReference>
<dbReference type="PANTHER" id="PTHR34471">
    <property type="entry name" value="ARGININE REPRESSOR"/>
    <property type="match status" value="1"/>
</dbReference>
<dbReference type="PANTHER" id="PTHR34471:SF1">
    <property type="entry name" value="ARGININE REPRESSOR"/>
    <property type="match status" value="1"/>
</dbReference>
<dbReference type="Pfam" id="PF01316">
    <property type="entry name" value="Arg_repressor"/>
    <property type="match status" value="1"/>
</dbReference>
<dbReference type="Pfam" id="PF02863">
    <property type="entry name" value="Arg_repressor_C"/>
    <property type="match status" value="1"/>
</dbReference>
<dbReference type="PRINTS" id="PR01467">
    <property type="entry name" value="ARGREPRESSOR"/>
</dbReference>
<dbReference type="SUPFAM" id="SSF55252">
    <property type="entry name" value="C-terminal domain of arginine repressor"/>
    <property type="match status" value="1"/>
</dbReference>
<dbReference type="SUPFAM" id="SSF46785">
    <property type="entry name" value="Winged helix' DNA-binding domain"/>
    <property type="match status" value="1"/>
</dbReference>
<gene>
    <name evidence="1" type="primary">argR</name>
    <name type="ordered locus">SEN3193</name>
</gene>
<organism>
    <name type="scientific">Salmonella enteritidis PT4 (strain P125109)</name>
    <dbReference type="NCBI Taxonomy" id="550537"/>
    <lineage>
        <taxon>Bacteria</taxon>
        <taxon>Pseudomonadati</taxon>
        <taxon>Pseudomonadota</taxon>
        <taxon>Gammaproteobacteria</taxon>
        <taxon>Enterobacterales</taxon>
        <taxon>Enterobacteriaceae</taxon>
        <taxon>Salmonella</taxon>
    </lineage>
</organism>
<sequence>MRSSAKQEELVRAFKALLKEEKFSSQGEIVLALQDQGFENINQSKVSRMLTKFGAVRTRNAKMEMVYCLPAELGVPTTSSPLKNLVLDIDYNDAVVVIHTSPGAAQLIARLLDSLGKAEGILGTIAGDDTIFTTPASGFSVRDLYEAILELFEQEL</sequence>
<feature type="chain" id="PRO_1000097882" description="Arginine repressor">
    <location>
        <begin position="1"/>
        <end position="156"/>
    </location>
</feature>
<accession>B5R1A3</accession>
<evidence type="ECO:0000255" key="1">
    <source>
        <dbReference type="HAMAP-Rule" id="MF_00173"/>
    </source>
</evidence>